<proteinExistence type="inferred from homology"/>
<comment type="function">
    <text evidence="1">Essential for recycling GMP and indirectly, cGMP.</text>
</comment>
<comment type="catalytic activity">
    <reaction evidence="1">
        <text>GMP + ATP = GDP + ADP</text>
        <dbReference type="Rhea" id="RHEA:20780"/>
        <dbReference type="ChEBI" id="CHEBI:30616"/>
        <dbReference type="ChEBI" id="CHEBI:58115"/>
        <dbReference type="ChEBI" id="CHEBI:58189"/>
        <dbReference type="ChEBI" id="CHEBI:456216"/>
        <dbReference type="EC" id="2.7.4.8"/>
    </reaction>
</comment>
<comment type="subcellular location">
    <subcellularLocation>
        <location evidence="1">Cytoplasm</location>
    </subcellularLocation>
</comment>
<comment type="similarity">
    <text evidence="1">Belongs to the guanylate kinase family.</text>
</comment>
<keyword id="KW-0067">ATP-binding</keyword>
<keyword id="KW-0963">Cytoplasm</keyword>
<keyword id="KW-0418">Kinase</keyword>
<keyword id="KW-0547">Nucleotide-binding</keyword>
<keyword id="KW-0808">Transferase</keyword>
<sequence>MAQGTLYIVSAPSGAGKSSLIQALLKTQPLYDTQVSVSHTTRAPRPGEVHGEHYFFVNHDEFKTMIGREAFLEHAEVFGNYYGTSRETIEQVLATGVDVFLDIDWQGAQQIREKMPQARSIFILPPSKIELDRRLRGRGQDSEEVIAKRMAQAVAEMSHYAEYDYLIVNDDFDTALSDLKTIIRAERLRMSRQKQRHDALISKLLAD</sequence>
<feature type="chain" id="PRO_0000170598" description="Guanylate kinase">
    <location>
        <begin position="1"/>
        <end position="207"/>
    </location>
</feature>
<feature type="domain" description="Guanylate kinase-like" evidence="1">
    <location>
        <begin position="4"/>
        <end position="184"/>
    </location>
</feature>
<feature type="binding site" evidence="1">
    <location>
        <begin position="11"/>
        <end position="18"/>
    </location>
    <ligand>
        <name>ATP</name>
        <dbReference type="ChEBI" id="CHEBI:30616"/>
    </ligand>
</feature>
<evidence type="ECO:0000255" key="1">
    <source>
        <dbReference type="HAMAP-Rule" id="MF_00328"/>
    </source>
</evidence>
<accession>Q8Z2H9</accession>
<dbReference type="EC" id="2.7.4.8" evidence="1"/>
<dbReference type="EMBL" id="AL513382">
    <property type="protein sequence ID" value="CAD03253.1"/>
    <property type="molecule type" value="Genomic_DNA"/>
</dbReference>
<dbReference type="EMBL" id="AE014613">
    <property type="protein sequence ID" value="AAO71261.1"/>
    <property type="molecule type" value="Genomic_DNA"/>
</dbReference>
<dbReference type="RefSeq" id="NP_458187.1">
    <property type="nucleotide sequence ID" value="NC_003198.1"/>
</dbReference>
<dbReference type="RefSeq" id="WP_000046966.1">
    <property type="nucleotide sequence ID" value="NZ_WSUR01000001.1"/>
</dbReference>
<dbReference type="SMR" id="Q8Z2H9"/>
<dbReference type="STRING" id="220341.gene:17587897"/>
<dbReference type="KEGG" id="stt:t3778"/>
<dbReference type="KEGG" id="sty:STY4052"/>
<dbReference type="PATRIC" id="fig|220341.7.peg.4136"/>
<dbReference type="eggNOG" id="COG0194">
    <property type="taxonomic scope" value="Bacteria"/>
</dbReference>
<dbReference type="HOGENOM" id="CLU_001715_1_0_6"/>
<dbReference type="OMA" id="EWAVVHG"/>
<dbReference type="OrthoDB" id="9808150at2"/>
<dbReference type="Proteomes" id="UP000000541">
    <property type="component" value="Chromosome"/>
</dbReference>
<dbReference type="Proteomes" id="UP000002670">
    <property type="component" value="Chromosome"/>
</dbReference>
<dbReference type="GO" id="GO:0005829">
    <property type="term" value="C:cytosol"/>
    <property type="evidence" value="ECO:0007669"/>
    <property type="project" value="TreeGrafter"/>
</dbReference>
<dbReference type="GO" id="GO:0005524">
    <property type="term" value="F:ATP binding"/>
    <property type="evidence" value="ECO:0007669"/>
    <property type="project" value="UniProtKB-UniRule"/>
</dbReference>
<dbReference type="GO" id="GO:0004385">
    <property type="term" value="F:guanylate kinase activity"/>
    <property type="evidence" value="ECO:0007669"/>
    <property type="project" value="UniProtKB-UniRule"/>
</dbReference>
<dbReference type="CDD" id="cd00071">
    <property type="entry name" value="GMPK"/>
    <property type="match status" value="1"/>
</dbReference>
<dbReference type="FunFam" id="3.40.50.300:FF:000084">
    <property type="entry name" value="Guanylate kinase"/>
    <property type="match status" value="1"/>
</dbReference>
<dbReference type="FunFam" id="3.30.63.10:FF:000002">
    <property type="entry name" value="Guanylate kinase 1"/>
    <property type="match status" value="1"/>
</dbReference>
<dbReference type="Gene3D" id="3.30.63.10">
    <property type="entry name" value="Guanylate Kinase phosphate binding domain"/>
    <property type="match status" value="1"/>
</dbReference>
<dbReference type="Gene3D" id="3.40.50.300">
    <property type="entry name" value="P-loop containing nucleotide triphosphate hydrolases"/>
    <property type="match status" value="1"/>
</dbReference>
<dbReference type="HAMAP" id="MF_00328">
    <property type="entry name" value="Guanylate_kinase"/>
    <property type="match status" value="1"/>
</dbReference>
<dbReference type="InterPro" id="IPR008145">
    <property type="entry name" value="GK/Ca_channel_bsu"/>
</dbReference>
<dbReference type="InterPro" id="IPR008144">
    <property type="entry name" value="Guanylate_kin-like_dom"/>
</dbReference>
<dbReference type="InterPro" id="IPR017665">
    <property type="entry name" value="Guanylate_kinase"/>
</dbReference>
<dbReference type="InterPro" id="IPR020590">
    <property type="entry name" value="Guanylate_kinase_CS"/>
</dbReference>
<dbReference type="InterPro" id="IPR027417">
    <property type="entry name" value="P-loop_NTPase"/>
</dbReference>
<dbReference type="NCBIfam" id="TIGR03263">
    <property type="entry name" value="guanyl_kin"/>
    <property type="match status" value="1"/>
</dbReference>
<dbReference type="PANTHER" id="PTHR23117:SF13">
    <property type="entry name" value="GUANYLATE KINASE"/>
    <property type="match status" value="1"/>
</dbReference>
<dbReference type="PANTHER" id="PTHR23117">
    <property type="entry name" value="GUANYLATE KINASE-RELATED"/>
    <property type="match status" value="1"/>
</dbReference>
<dbReference type="Pfam" id="PF00625">
    <property type="entry name" value="Guanylate_kin"/>
    <property type="match status" value="1"/>
</dbReference>
<dbReference type="SMART" id="SM00072">
    <property type="entry name" value="GuKc"/>
    <property type="match status" value="1"/>
</dbReference>
<dbReference type="SUPFAM" id="SSF52540">
    <property type="entry name" value="P-loop containing nucleoside triphosphate hydrolases"/>
    <property type="match status" value="1"/>
</dbReference>
<dbReference type="PROSITE" id="PS00856">
    <property type="entry name" value="GUANYLATE_KINASE_1"/>
    <property type="match status" value="1"/>
</dbReference>
<dbReference type="PROSITE" id="PS50052">
    <property type="entry name" value="GUANYLATE_KINASE_2"/>
    <property type="match status" value="1"/>
</dbReference>
<protein>
    <recommendedName>
        <fullName evidence="1">Guanylate kinase</fullName>
        <ecNumber evidence="1">2.7.4.8</ecNumber>
    </recommendedName>
    <alternativeName>
        <fullName evidence="1">GMP kinase</fullName>
    </alternativeName>
</protein>
<name>KGUA_SALTI</name>
<organism>
    <name type="scientific">Salmonella typhi</name>
    <dbReference type="NCBI Taxonomy" id="90370"/>
    <lineage>
        <taxon>Bacteria</taxon>
        <taxon>Pseudomonadati</taxon>
        <taxon>Pseudomonadota</taxon>
        <taxon>Gammaproteobacteria</taxon>
        <taxon>Enterobacterales</taxon>
        <taxon>Enterobacteriaceae</taxon>
        <taxon>Salmonella</taxon>
    </lineage>
</organism>
<gene>
    <name evidence="1" type="primary">gmk</name>
    <name type="ordered locus">STY4052</name>
    <name type="ordered locus">t3778</name>
</gene>
<reference key="1">
    <citation type="journal article" date="2001" name="Nature">
        <title>Complete genome sequence of a multiple drug resistant Salmonella enterica serovar Typhi CT18.</title>
        <authorList>
            <person name="Parkhill J."/>
            <person name="Dougan G."/>
            <person name="James K.D."/>
            <person name="Thomson N.R."/>
            <person name="Pickard D."/>
            <person name="Wain J."/>
            <person name="Churcher C.M."/>
            <person name="Mungall K.L."/>
            <person name="Bentley S.D."/>
            <person name="Holden M.T.G."/>
            <person name="Sebaihia M."/>
            <person name="Baker S."/>
            <person name="Basham D."/>
            <person name="Brooks K."/>
            <person name="Chillingworth T."/>
            <person name="Connerton P."/>
            <person name="Cronin A."/>
            <person name="Davis P."/>
            <person name="Davies R.M."/>
            <person name="Dowd L."/>
            <person name="White N."/>
            <person name="Farrar J."/>
            <person name="Feltwell T."/>
            <person name="Hamlin N."/>
            <person name="Haque A."/>
            <person name="Hien T.T."/>
            <person name="Holroyd S."/>
            <person name="Jagels K."/>
            <person name="Krogh A."/>
            <person name="Larsen T.S."/>
            <person name="Leather S."/>
            <person name="Moule S."/>
            <person name="O'Gaora P."/>
            <person name="Parry C."/>
            <person name="Quail M.A."/>
            <person name="Rutherford K.M."/>
            <person name="Simmonds M."/>
            <person name="Skelton J."/>
            <person name="Stevens K."/>
            <person name="Whitehead S."/>
            <person name="Barrell B.G."/>
        </authorList>
    </citation>
    <scope>NUCLEOTIDE SEQUENCE [LARGE SCALE GENOMIC DNA]</scope>
    <source>
        <strain>CT18</strain>
    </source>
</reference>
<reference key="2">
    <citation type="journal article" date="2003" name="J. Bacteriol.">
        <title>Comparative genomics of Salmonella enterica serovar Typhi strains Ty2 and CT18.</title>
        <authorList>
            <person name="Deng W."/>
            <person name="Liou S.-R."/>
            <person name="Plunkett G. III"/>
            <person name="Mayhew G.F."/>
            <person name="Rose D.J."/>
            <person name="Burland V."/>
            <person name="Kodoyianni V."/>
            <person name="Schwartz D.C."/>
            <person name="Blattner F.R."/>
        </authorList>
    </citation>
    <scope>NUCLEOTIDE SEQUENCE [LARGE SCALE GENOMIC DNA]</scope>
    <source>
        <strain>ATCC 700931 / Ty2</strain>
    </source>
</reference>